<comment type="function">
    <text evidence="2 3 4">Removes uracil bases that are present in DNA as a result of either deamination of cytosine or misincorporation of dUMP instead of dTMP. Can remove uracil from double-stranded DNA containing either a U/G or U/A base pair as well as from single-stranded DNA.</text>
</comment>
<comment type="catalytic activity">
    <reaction evidence="2 3 4">
        <text>Hydrolyzes single-stranded DNA or mismatched double-stranded DNA and polynucleotides, releasing free uracil.</text>
        <dbReference type="EC" id="3.2.2.27"/>
    </reaction>
</comment>
<comment type="activity regulation">
    <text evidence="2">Product-inhibited by both uracil and apurinic/apyrimidinic sites.</text>
</comment>
<comment type="biophysicochemical properties">
    <phDependence>
        <text evidence="5">Optimum pH is around 6.2.</text>
    </phDependence>
    <temperatureDependence>
        <text evidence="2 5">Extremely thermostable, maintaining full activity after heating for 1.5 hour at 95 degrees Celsius (PubMed:10777501). Exhibits a broad temperature optimum for activity around 80 degrees Celsius (PubMed:24936520).</text>
    </temperatureDependence>
</comment>
<comment type="domain">
    <text evidence="4">Contains a pseudo-FCL region, a large solvent-exposed peptide region containing an alpha helix and loop anchored on each end via ligation of two cysteine thiolates to a [4Fe-4S](2+) cluster. This region is involved in DNA binding and catalysis, particularly in duplex DNA contexts.</text>
</comment>
<comment type="similarity">
    <text evidence="7">Belongs to the uracil-DNA glycosylase (UDG) superfamily. Type 4 (UDGa) family.</text>
</comment>
<evidence type="ECO:0000250" key="1">
    <source>
        <dbReference type="UniProtKB" id="Q5SKC5"/>
    </source>
</evidence>
<evidence type="ECO:0000269" key="2">
    <source>
    </source>
</evidence>
<evidence type="ECO:0000269" key="3">
    <source>
    </source>
</evidence>
<evidence type="ECO:0000269" key="4">
    <source>
    </source>
</evidence>
<evidence type="ECO:0000269" key="5">
    <source>
    </source>
</evidence>
<evidence type="ECO:0000303" key="6">
    <source>
    </source>
</evidence>
<evidence type="ECO:0000305" key="7"/>
<evidence type="ECO:0000305" key="8">
    <source>
    </source>
</evidence>
<evidence type="ECO:0000312" key="9">
    <source>
        <dbReference type="EMBL" id="AAB88977.1"/>
    </source>
</evidence>
<feature type="chain" id="PRO_0000439183" description="Type-4 uracil-DNA glycosylase">
    <location>
        <begin position="1"/>
        <end position="199"/>
    </location>
</feature>
<feature type="region of interest" description="Pseudo-FCL" evidence="8">
    <location>
        <begin position="77"/>
        <end position="114"/>
    </location>
</feature>
<feature type="binding site" evidence="1">
    <location>
        <position position="14"/>
    </location>
    <ligand>
        <name>[4Fe-4S] cluster</name>
        <dbReference type="ChEBI" id="CHEBI:49883"/>
    </ligand>
</feature>
<feature type="binding site" evidence="1">
    <location>
        <position position="17"/>
    </location>
    <ligand>
        <name>[4Fe-4S] cluster</name>
        <dbReference type="ChEBI" id="CHEBI:49883"/>
    </ligand>
</feature>
<feature type="binding site" evidence="1">
    <location>
        <begin position="41"/>
        <end position="43"/>
    </location>
    <ligand>
        <name>uracil</name>
        <dbReference type="ChEBI" id="CHEBI:17568"/>
    </ligand>
</feature>
<feature type="binding site" evidence="1">
    <location>
        <position position="55"/>
    </location>
    <ligand>
        <name>uracil</name>
        <dbReference type="ChEBI" id="CHEBI:17568"/>
    </ligand>
</feature>
<feature type="binding site" evidence="1">
    <location>
        <position position="81"/>
    </location>
    <ligand>
        <name>uracil</name>
        <dbReference type="ChEBI" id="CHEBI:17568"/>
    </ligand>
</feature>
<feature type="binding site" evidence="1">
    <location>
        <position position="85"/>
    </location>
    <ligand>
        <name>[4Fe-4S] cluster</name>
        <dbReference type="ChEBI" id="CHEBI:49883"/>
    </ligand>
</feature>
<feature type="binding site" evidence="1">
    <location>
        <position position="101"/>
    </location>
    <ligand>
        <name>[4Fe-4S] cluster</name>
        <dbReference type="ChEBI" id="CHEBI:49883"/>
    </ligand>
</feature>
<feature type="binding site" evidence="1">
    <location>
        <position position="163"/>
    </location>
    <ligand>
        <name>uracil</name>
        <dbReference type="ChEBI" id="CHEBI:17568"/>
    </ligand>
</feature>
<feature type="mutagenesis site" description="Shows reduced uracil excision efficiency." evidence="4">
    <original>C</original>
    <variation>A</variation>
    <location>
        <position position="85"/>
    </location>
</feature>
<feature type="mutagenesis site" description="Shows reduced activity for uracil removal only within double-stranded DNA." evidence="4">
    <original>R</original>
    <variation>A</variation>
    <location>
        <position position="86"/>
    </location>
</feature>
<feature type="mutagenesis site" description="Loss of the iron-sulfur cluster." evidence="4">
    <original>R</original>
    <variation>A</variation>
    <location>
        <position position="91"/>
    </location>
</feature>
<feature type="mutagenesis site" description="Shows increased uracil excision efficiency." evidence="4">
    <original>K</original>
    <variation>A</variation>
    <location>
        <position position="100"/>
    </location>
</feature>
<feature type="mutagenesis site" description="Shows reduced uracil excision efficiency." evidence="4">
    <original>C</original>
    <variation>A</variation>
    <location>
        <position position="101"/>
    </location>
</feature>
<name>UDGA_ARCFU</name>
<reference key="1">
    <citation type="journal article" date="1997" name="Nature">
        <title>The complete genome sequence of the hyperthermophilic, sulphate-reducing archaeon Archaeoglobus fulgidus.</title>
        <authorList>
            <person name="Klenk H.-P."/>
            <person name="Clayton R.A."/>
            <person name="Tomb J.-F."/>
            <person name="White O."/>
            <person name="Nelson K.E."/>
            <person name="Ketchum K.A."/>
            <person name="Dodson R.J."/>
            <person name="Gwinn M.L."/>
            <person name="Hickey E.K."/>
            <person name="Peterson J.D."/>
            <person name="Richardson D.L."/>
            <person name="Kerlavage A.R."/>
            <person name="Graham D.E."/>
            <person name="Kyrpides N.C."/>
            <person name="Fleischmann R.D."/>
            <person name="Quackenbush J."/>
            <person name="Lee N.H."/>
            <person name="Sutton G.G."/>
            <person name="Gill S.R."/>
            <person name="Kirkness E.F."/>
            <person name="Dougherty B.A."/>
            <person name="McKenney K."/>
            <person name="Adams M.D."/>
            <person name="Loftus B.J."/>
            <person name="Peterson S.N."/>
            <person name="Reich C.I."/>
            <person name="McNeil L.K."/>
            <person name="Badger J.H."/>
            <person name="Glodek A."/>
            <person name="Zhou L."/>
            <person name="Overbeek R."/>
            <person name="Gocayne J.D."/>
            <person name="Weidman J.F."/>
            <person name="McDonald L.A."/>
            <person name="Utterback T.R."/>
            <person name="Cotton M.D."/>
            <person name="Spriggs T."/>
            <person name="Artiach P."/>
            <person name="Kaine B.P."/>
            <person name="Sykes S.M."/>
            <person name="Sadow P.W."/>
            <person name="D'Andrea K.P."/>
            <person name="Bowman C."/>
            <person name="Fujii C."/>
            <person name="Garland S.A."/>
            <person name="Mason T.M."/>
            <person name="Olsen G.J."/>
            <person name="Fraser C.M."/>
            <person name="Smith H.O."/>
            <person name="Woese C.R."/>
            <person name="Venter J.C."/>
        </authorList>
    </citation>
    <scope>NUCLEOTIDE SEQUENCE [LARGE SCALE GENOMIC DNA]</scope>
    <source>
        <strain>ATCC 49558 / DSM 4304 / JCM 9628 / NBRC 100126 / VC-16</strain>
    </source>
</reference>
<reference key="2">
    <citation type="journal article" date="2000" name="J. Biol. Chem.">
        <title>Uracil-DNA glycosylase in the extreme thermophile Archaeoglobus fulgidus.</title>
        <authorList>
            <person name="Sandigursky M."/>
            <person name="Franklin W.A."/>
        </authorList>
    </citation>
    <scope>FUNCTION</scope>
    <scope>CATALYTIC ACTIVITY</scope>
    <scope>ACTIVITY REGULATION</scope>
    <scope>BIOPHYSICOCHEMICAL PROPERTIES</scope>
</reference>
<reference key="3">
    <citation type="journal article" date="2010" name="J. Bacteriol.">
        <title>The hyperthermophilic euryarchaeon Archaeoglobus fulgidus repairs uracil by single-nucleotide replacement.</title>
        <authorList>
            <person name="Knaevelsrud I."/>
            <person name="Moen M.N."/>
            <person name="Groesvik K."/>
            <person name="Haugland G.T."/>
            <person name="Birkeland N.K."/>
            <person name="Klungland A."/>
            <person name="Leiros I."/>
            <person name="Bjelland S."/>
        </authorList>
    </citation>
    <scope>FUNCTION</scope>
    <scope>CATALYTIC ACTIVITY</scope>
    <source>
        <strain>ATCC 49558 / DSM 4304 / JCM 9628 / NBRC 100126 / VC-16</strain>
    </source>
</reference>
<reference key="4">
    <citation type="journal article" date="2012" name="Biochemistry">
        <title>An iron-sulfur cluster loop motif in the Archaeoglobus fulgidus uracil-DNA glycosylase mediates efficient uracil recognition and removal.</title>
        <authorList>
            <person name="Engstrom L.M."/>
            <person name="Partington O.A."/>
            <person name="David S.S."/>
        </authorList>
    </citation>
    <scope>FUNCTION</scope>
    <scope>CATALYTIC ACTIVITY</scope>
    <scope>DOMAIN</scope>
    <scope>MUTAGENESIS OF CYS-85; ARG-86; ARG-91; LYS-100 AND CYS-101</scope>
</reference>
<reference key="5">
    <citation type="journal article" date="2014" name="Acta Biochim. Pol.">
        <title>The pH optimum of native uracil-DNA glycosylase of Archaeoglobus fulgidus compared to recombinant enzyme indicates adaption to cytosolic pH.</title>
        <authorList>
            <person name="Knaevelsrud I."/>
            <person name="Kazazic S."/>
            <person name="Birkeland N.K."/>
            <person name="Bjelland S."/>
        </authorList>
    </citation>
    <scope>BIOPHYSICOCHEMICAL PROPERTIES</scope>
    <source>
        <strain>ATCC 49558 / DSM 4304 / JCM 9628 / NBRC 100126 / VC-16</strain>
    </source>
</reference>
<sequence length="199" mass="22718">MESLDDIVREIMSCRKCDLHKTKTNYVPGVGNEKAEIVFVGEAPGRDEDLKGEPFVGAAGKLLTEMLASIGLRREDVYITNVLKCRPPNNRDPTPEEVEKCGDYLVRQLEAIRPNVIVCLGRFAAQFIFNLFDLEFTTISRVKGKVYEVERWGKKVKVIAIYHPAAVLYRPQLREEYESDFKKIGELCGKKQPTLFDYL</sequence>
<gene>
    <name evidence="6" type="primary">afung</name>
    <name evidence="9" type="ordered locus">AF_2277</name>
</gene>
<dbReference type="EC" id="3.2.2.27" evidence="2 3"/>
<dbReference type="EMBL" id="AE000782">
    <property type="protein sequence ID" value="AAB88977.1"/>
    <property type="molecule type" value="Genomic_DNA"/>
</dbReference>
<dbReference type="PIR" id="E69534">
    <property type="entry name" value="E69534"/>
</dbReference>
<dbReference type="RefSeq" id="WP_010879766.1">
    <property type="nucleotide sequence ID" value="NC_000917.1"/>
</dbReference>
<dbReference type="SMR" id="O28007"/>
<dbReference type="STRING" id="224325.AF_2277"/>
<dbReference type="PaxDb" id="224325-AF_2277"/>
<dbReference type="EnsemblBacteria" id="AAB88977">
    <property type="protein sequence ID" value="AAB88977"/>
    <property type="gene ID" value="AF_2277"/>
</dbReference>
<dbReference type="GeneID" id="1485509"/>
<dbReference type="KEGG" id="afu:AF_2277"/>
<dbReference type="eggNOG" id="arCOG00905">
    <property type="taxonomic scope" value="Archaea"/>
</dbReference>
<dbReference type="HOGENOM" id="CLU_044815_1_3_2"/>
<dbReference type="OrthoDB" id="8612at2157"/>
<dbReference type="PhylomeDB" id="O28007"/>
<dbReference type="BRENDA" id="3.2.2.27">
    <property type="organism ID" value="414"/>
</dbReference>
<dbReference type="Proteomes" id="UP000002199">
    <property type="component" value="Chromosome"/>
</dbReference>
<dbReference type="GO" id="GO:0051539">
    <property type="term" value="F:4 iron, 4 sulfur cluster binding"/>
    <property type="evidence" value="ECO:0007669"/>
    <property type="project" value="UniProtKB-KW"/>
</dbReference>
<dbReference type="GO" id="GO:0046872">
    <property type="term" value="F:metal ion binding"/>
    <property type="evidence" value="ECO:0007669"/>
    <property type="project" value="UniProtKB-KW"/>
</dbReference>
<dbReference type="GO" id="GO:0004844">
    <property type="term" value="F:uracil DNA N-glycosylase activity"/>
    <property type="evidence" value="ECO:0000314"/>
    <property type="project" value="UniProtKB"/>
</dbReference>
<dbReference type="GO" id="GO:0006281">
    <property type="term" value="P:DNA repair"/>
    <property type="evidence" value="ECO:0000314"/>
    <property type="project" value="UniProtKB"/>
</dbReference>
<dbReference type="CDD" id="cd10030">
    <property type="entry name" value="UDG-F4_TTUDGA_SPO1dp_like"/>
    <property type="match status" value="1"/>
</dbReference>
<dbReference type="FunFam" id="3.40.470.10:FF:000013">
    <property type="entry name" value="Type-4 uracil-DNA glycosylase"/>
    <property type="match status" value="1"/>
</dbReference>
<dbReference type="Gene3D" id="3.40.470.10">
    <property type="entry name" value="Uracil-DNA glycosylase-like domain"/>
    <property type="match status" value="1"/>
</dbReference>
<dbReference type="InterPro" id="IPR053423">
    <property type="entry name" value="Type-4_UDG"/>
</dbReference>
<dbReference type="InterPro" id="IPR051536">
    <property type="entry name" value="UDG_Type-4/5"/>
</dbReference>
<dbReference type="InterPro" id="IPR005273">
    <property type="entry name" value="Ura-DNA_glyco_family4"/>
</dbReference>
<dbReference type="InterPro" id="IPR005122">
    <property type="entry name" value="Uracil-DNA_glycosylase-like"/>
</dbReference>
<dbReference type="InterPro" id="IPR036895">
    <property type="entry name" value="Uracil-DNA_glycosylase-like_sf"/>
</dbReference>
<dbReference type="NCBIfam" id="NF040953">
    <property type="entry name" value="Arch_udg"/>
    <property type="match status" value="1"/>
</dbReference>
<dbReference type="NCBIfam" id="TIGR00758">
    <property type="entry name" value="UDG_fam4"/>
    <property type="match status" value="1"/>
</dbReference>
<dbReference type="PANTHER" id="PTHR33693:SF1">
    <property type="entry name" value="TYPE-4 URACIL-DNA GLYCOSYLASE"/>
    <property type="match status" value="1"/>
</dbReference>
<dbReference type="PANTHER" id="PTHR33693">
    <property type="entry name" value="TYPE-5 URACIL-DNA GLYCOSYLASE"/>
    <property type="match status" value="1"/>
</dbReference>
<dbReference type="Pfam" id="PF03167">
    <property type="entry name" value="UDG"/>
    <property type="match status" value="1"/>
</dbReference>
<dbReference type="SMART" id="SM00986">
    <property type="entry name" value="UDG"/>
    <property type="match status" value="1"/>
</dbReference>
<dbReference type="SMART" id="SM00987">
    <property type="entry name" value="UreE_C"/>
    <property type="match status" value="1"/>
</dbReference>
<dbReference type="SUPFAM" id="SSF52141">
    <property type="entry name" value="Uracil-DNA glycosylase-like"/>
    <property type="match status" value="1"/>
</dbReference>
<proteinExistence type="evidence at protein level"/>
<keyword id="KW-0004">4Fe-4S</keyword>
<keyword id="KW-0227">DNA damage</keyword>
<keyword id="KW-0234">DNA repair</keyword>
<keyword id="KW-0378">Hydrolase</keyword>
<keyword id="KW-0408">Iron</keyword>
<keyword id="KW-0411">Iron-sulfur</keyword>
<keyword id="KW-0479">Metal-binding</keyword>
<keyword id="KW-1185">Reference proteome</keyword>
<accession>O28007</accession>
<protein>
    <recommendedName>
        <fullName evidence="7">Type-4 uracil-DNA glycosylase</fullName>
        <ecNumber evidence="2 3">3.2.2.27</ecNumber>
    </recommendedName>
    <alternativeName>
        <fullName evidence="6">AFUDG</fullName>
    </alternativeName>
</protein>
<organism>
    <name type="scientific">Archaeoglobus fulgidus (strain ATCC 49558 / DSM 4304 / JCM 9628 / NBRC 100126 / VC-16)</name>
    <dbReference type="NCBI Taxonomy" id="224325"/>
    <lineage>
        <taxon>Archaea</taxon>
        <taxon>Methanobacteriati</taxon>
        <taxon>Methanobacteriota</taxon>
        <taxon>Archaeoglobi</taxon>
        <taxon>Archaeoglobales</taxon>
        <taxon>Archaeoglobaceae</taxon>
        <taxon>Archaeoglobus</taxon>
    </lineage>
</organism>